<keyword id="KW-0963">Cytoplasm</keyword>
<keyword id="KW-0269">Exonuclease</keyword>
<keyword id="KW-0378">Hydrolase</keyword>
<keyword id="KW-0540">Nuclease</keyword>
<reference key="1">
    <citation type="journal article" date="2003" name="Nucleic Acids Res.">
        <title>Genome sequence of Chlamydophila caviae (Chlamydia psittaci GPIC): examining the role of niche-specific genes in the evolution of the Chlamydiaceae.</title>
        <authorList>
            <person name="Read T.D."/>
            <person name="Myers G.S.A."/>
            <person name="Brunham R.C."/>
            <person name="Nelson W.C."/>
            <person name="Paulsen I.T."/>
            <person name="Heidelberg J.F."/>
            <person name="Holtzapple E.K."/>
            <person name="Khouri H.M."/>
            <person name="Federova N.B."/>
            <person name="Carty H.A."/>
            <person name="Umayam L.A."/>
            <person name="Haft D.H."/>
            <person name="Peterson J.D."/>
            <person name="Beanan M.J."/>
            <person name="White O."/>
            <person name="Salzberg S.L."/>
            <person name="Hsia R.-C."/>
            <person name="McClarty G."/>
            <person name="Rank R.G."/>
            <person name="Bavoil P.M."/>
            <person name="Fraser C.M."/>
        </authorList>
    </citation>
    <scope>NUCLEOTIDE SEQUENCE [LARGE SCALE GENOMIC DNA]</scope>
    <source>
        <strain>ATCC VR-813 / DSM 19441 / 03DC25 / GPIC</strain>
    </source>
</reference>
<organism>
    <name type="scientific">Chlamydia caviae (strain ATCC VR-813 / DSM 19441 / 03DC25 / GPIC)</name>
    <name type="common">Chlamydophila caviae</name>
    <dbReference type="NCBI Taxonomy" id="227941"/>
    <lineage>
        <taxon>Bacteria</taxon>
        <taxon>Pseudomonadati</taxon>
        <taxon>Chlamydiota</taxon>
        <taxon>Chlamydiia</taxon>
        <taxon>Chlamydiales</taxon>
        <taxon>Chlamydiaceae</taxon>
        <taxon>Chlamydia/Chlamydophila group</taxon>
        <taxon>Chlamydia</taxon>
    </lineage>
</organism>
<comment type="function">
    <text evidence="1">Bidirectionally degrades single-stranded DNA into large acid-insoluble oligonucleotides, which are then degraded further into small acid-soluble oligonucleotides.</text>
</comment>
<comment type="catalytic activity">
    <reaction evidence="1">
        <text>Exonucleolytic cleavage in either 5'- to 3'- or 3'- to 5'-direction to yield nucleoside 5'-phosphates.</text>
        <dbReference type="EC" id="3.1.11.6"/>
    </reaction>
</comment>
<comment type="subunit">
    <text evidence="1">Heterooligomer composed of large and small subunits.</text>
</comment>
<comment type="subcellular location">
    <subcellularLocation>
        <location evidence="1">Cytoplasm</location>
    </subcellularLocation>
</comment>
<comment type="similarity">
    <text evidence="1">Belongs to the XseB family.</text>
</comment>
<name>EX7S_CHLCV</name>
<evidence type="ECO:0000255" key="1">
    <source>
        <dbReference type="HAMAP-Rule" id="MF_00337"/>
    </source>
</evidence>
<accession>Q823U9</accession>
<sequence length="75" mass="8761">MEEIPFENAMARLEEIVDLMNQPSTSLDSSLKLYEEADALMRICESRIRKAEDRVRELSEKRNETLLSEEESCTH</sequence>
<protein>
    <recommendedName>
        <fullName evidence="1">Exodeoxyribonuclease 7 small subunit</fullName>
        <ecNumber evidence="1">3.1.11.6</ecNumber>
    </recommendedName>
    <alternativeName>
        <fullName evidence="1">Exodeoxyribonuclease VII small subunit</fullName>
        <shortName evidence="1">Exonuclease VII small subunit</shortName>
    </alternativeName>
</protein>
<proteinExistence type="inferred from homology"/>
<feature type="chain" id="PRO_1000119908" description="Exodeoxyribonuclease 7 small subunit">
    <location>
        <begin position="1"/>
        <end position="75"/>
    </location>
</feature>
<dbReference type="EC" id="3.1.11.6" evidence="1"/>
<dbReference type="EMBL" id="AE015925">
    <property type="protein sequence ID" value="AAP05055.1"/>
    <property type="molecule type" value="Genomic_DNA"/>
</dbReference>
<dbReference type="RefSeq" id="WP_011006273.1">
    <property type="nucleotide sequence ID" value="NC_003361.3"/>
</dbReference>
<dbReference type="SMR" id="Q823U9"/>
<dbReference type="STRING" id="227941.CCA_00306"/>
<dbReference type="KEGG" id="cca:CCA_00306"/>
<dbReference type="eggNOG" id="COG1722">
    <property type="taxonomic scope" value="Bacteria"/>
</dbReference>
<dbReference type="HOGENOM" id="CLU_145918_3_4_0"/>
<dbReference type="OrthoDB" id="21553at2"/>
<dbReference type="Proteomes" id="UP000002193">
    <property type="component" value="Chromosome"/>
</dbReference>
<dbReference type="GO" id="GO:0005829">
    <property type="term" value="C:cytosol"/>
    <property type="evidence" value="ECO:0007669"/>
    <property type="project" value="TreeGrafter"/>
</dbReference>
<dbReference type="GO" id="GO:0009318">
    <property type="term" value="C:exodeoxyribonuclease VII complex"/>
    <property type="evidence" value="ECO:0007669"/>
    <property type="project" value="InterPro"/>
</dbReference>
<dbReference type="GO" id="GO:0008855">
    <property type="term" value="F:exodeoxyribonuclease VII activity"/>
    <property type="evidence" value="ECO:0007669"/>
    <property type="project" value="UniProtKB-UniRule"/>
</dbReference>
<dbReference type="GO" id="GO:0006308">
    <property type="term" value="P:DNA catabolic process"/>
    <property type="evidence" value="ECO:0007669"/>
    <property type="project" value="UniProtKB-UniRule"/>
</dbReference>
<dbReference type="Gene3D" id="1.10.287.1040">
    <property type="entry name" value="Exonuclease VII, small subunit"/>
    <property type="match status" value="1"/>
</dbReference>
<dbReference type="HAMAP" id="MF_00337">
    <property type="entry name" value="Exonuc_7_S"/>
    <property type="match status" value="1"/>
</dbReference>
<dbReference type="InterPro" id="IPR003761">
    <property type="entry name" value="Exonuc_VII_S"/>
</dbReference>
<dbReference type="InterPro" id="IPR037004">
    <property type="entry name" value="Exonuc_VII_ssu_sf"/>
</dbReference>
<dbReference type="NCBIfam" id="NF002140">
    <property type="entry name" value="PRK00977.1-4"/>
    <property type="match status" value="1"/>
</dbReference>
<dbReference type="NCBIfam" id="TIGR01280">
    <property type="entry name" value="xseB"/>
    <property type="match status" value="1"/>
</dbReference>
<dbReference type="PANTHER" id="PTHR34137">
    <property type="entry name" value="EXODEOXYRIBONUCLEASE 7 SMALL SUBUNIT"/>
    <property type="match status" value="1"/>
</dbReference>
<dbReference type="PANTHER" id="PTHR34137:SF1">
    <property type="entry name" value="EXODEOXYRIBONUCLEASE 7 SMALL SUBUNIT"/>
    <property type="match status" value="1"/>
</dbReference>
<dbReference type="Pfam" id="PF02609">
    <property type="entry name" value="Exonuc_VII_S"/>
    <property type="match status" value="1"/>
</dbReference>
<dbReference type="PIRSF" id="PIRSF006488">
    <property type="entry name" value="Exonuc_VII_S"/>
    <property type="match status" value="1"/>
</dbReference>
<dbReference type="SUPFAM" id="SSF116842">
    <property type="entry name" value="XseB-like"/>
    <property type="match status" value="1"/>
</dbReference>
<gene>
    <name evidence="1" type="primary">xseB</name>
    <name type="ordered locus">CCA_00306</name>
</gene>